<keyword id="KW-0963">Cytoplasm</keyword>
<keyword id="KW-0671">Queuosine biosynthesis</keyword>
<keyword id="KW-1185">Reference proteome</keyword>
<keyword id="KW-0949">S-adenosyl-L-methionine</keyword>
<keyword id="KW-0808">Transferase</keyword>
<protein>
    <recommendedName>
        <fullName evidence="1">S-adenosylmethionine:tRNA ribosyltransferase-isomerase</fullName>
        <ecNumber evidence="1">2.4.99.17</ecNumber>
    </recommendedName>
    <alternativeName>
        <fullName evidence="1">Queuosine biosynthesis protein QueA</fullName>
    </alternativeName>
</protein>
<evidence type="ECO:0000255" key="1">
    <source>
        <dbReference type="HAMAP-Rule" id="MF_00113"/>
    </source>
</evidence>
<proteinExistence type="inferred from homology"/>
<dbReference type="EC" id="2.4.99.17" evidence="1"/>
<dbReference type="EMBL" id="BA000040">
    <property type="protein sequence ID" value="BAC49954.1"/>
    <property type="molecule type" value="Genomic_DNA"/>
</dbReference>
<dbReference type="RefSeq" id="NP_771329.1">
    <property type="nucleotide sequence ID" value="NC_004463.1"/>
</dbReference>
<dbReference type="RefSeq" id="WP_011087458.1">
    <property type="nucleotide sequence ID" value="NC_004463.1"/>
</dbReference>
<dbReference type="SMR" id="Q89L59"/>
<dbReference type="FunCoup" id="Q89L59">
    <property type="interactions" value="533"/>
</dbReference>
<dbReference type="STRING" id="224911.AAV28_20740"/>
<dbReference type="EnsemblBacteria" id="BAC49954">
    <property type="protein sequence ID" value="BAC49954"/>
    <property type="gene ID" value="BAC49954"/>
</dbReference>
<dbReference type="GeneID" id="46491699"/>
<dbReference type="KEGG" id="bja:bll4689"/>
<dbReference type="PATRIC" id="fig|224911.44.peg.4516"/>
<dbReference type="eggNOG" id="COG0809">
    <property type="taxonomic scope" value="Bacteria"/>
</dbReference>
<dbReference type="HOGENOM" id="CLU_039110_1_1_5"/>
<dbReference type="InParanoid" id="Q89L59"/>
<dbReference type="OrthoDB" id="9805933at2"/>
<dbReference type="PhylomeDB" id="Q89L59"/>
<dbReference type="UniPathway" id="UPA00392"/>
<dbReference type="Proteomes" id="UP000002526">
    <property type="component" value="Chromosome"/>
</dbReference>
<dbReference type="GO" id="GO:0005737">
    <property type="term" value="C:cytoplasm"/>
    <property type="evidence" value="ECO:0007669"/>
    <property type="project" value="UniProtKB-SubCell"/>
</dbReference>
<dbReference type="GO" id="GO:0051075">
    <property type="term" value="F:S-adenosylmethionine:tRNA ribosyltransferase-isomerase activity"/>
    <property type="evidence" value="ECO:0000318"/>
    <property type="project" value="GO_Central"/>
</dbReference>
<dbReference type="GO" id="GO:0008616">
    <property type="term" value="P:queuosine biosynthetic process"/>
    <property type="evidence" value="ECO:0000318"/>
    <property type="project" value="GO_Central"/>
</dbReference>
<dbReference type="GO" id="GO:0002099">
    <property type="term" value="P:tRNA wobble guanine modification"/>
    <property type="evidence" value="ECO:0000318"/>
    <property type="project" value="GO_Central"/>
</dbReference>
<dbReference type="FunFam" id="2.40.10.240:FF:000004">
    <property type="entry name" value="S-adenosylmethionine:tRNA ribosyltransferase-isomerase"/>
    <property type="match status" value="1"/>
</dbReference>
<dbReference type="FunFam" id="3.40.1780.10:FF:000001">
    <property type="entry name" value="S-adenosylmethionine:tRNA ribosyltransferase-isomerase"/>
    <property type="match status" value="1"/>
</dbReference>
<dbReference type="Gene3D" id="2.40.10.240">
    <property type="entry name" value="QueA-like"/>
    <property type="match status" value="1"/>
</dbReference>
<dbReference type="Gene3D" id="3.40.1780.10">
    <property type="entry name" value="QueA-like"/>
    <property type="match status" value="1"/>
</dbReference>
<dbReference type="HAMAP" id="MF_00113">
    <property type="entry name" value="QueA"/>
    <property type="match status" value="1"/>
</dbReference>
<dbReference type="InterPro" id="IPR003699">
    <property type="entry name" value="QueA"/>
</dbReference>
<dbReference type="InterPro" id="IPR042118">
    <property type="entry name" value="QueA_dom1"/>
</dbReference>
<dbReference type="InterPro" id="IPR042119">
    <property type="entry name" value="QueA_dom2"/>
</dbReference>
<dbReference type="InterPro" id="IPR036100">
    <property type="entry name" value="QueA_sf"/>
</dbReference>
<dbReference type="NCBIfam" id="NF001140">
    <property type="entry name" value="PRK00147.1"/>
    <property type="match status" value="1"/>
</dbReference>
<dbReference type="NCBIfam" id="TIGR00113">
    <property type="entry name" value="queA"/>
    <property type="match status" value="1"/>
</dbReference>
<dbReference type="PANTHER" id="PTHR30307">
    <property type="entry name" value="S-ADENOSYLMETHIONINE:TRNA RIBOSYLTRANSFERASE-ISOMERASE"/>
    <property type="match status" value="1"/>
</dbReference>
<dbReference type="PANTHER" id="PTHR30307:SF0">
    <property type="entry name" value="S-ADENOSYLMETHIONINE:TRNA RIBOSYLTRANSFERASE-ISOMERASE"/>
    <property type="match status" value="1"/>
</dbReference>
<dbReference type="Pfam" id="PF02547">
    <property type="entry name" value="Queuosine_synth"/>
    <property type="match status" value="1"/>
</dbReference>
<dbReference type="SUPFAM" id="SSF111337">
    <property type="entry name" value="QueA-like"/>
    <property type="match status" value="1"/>
</dbReference>
<organism>
    <name type="scientific">Bradyrhizobium diazoefficiens (strain JCM 10833 / BCRC 13528 / IAM 13628 / NBRC 14792 / USDA 110)</name>
    <dbReference type="NCBI Taxonomy" id="224911"/>
    <lineage>
        <taxon>Bacteria</taxon>
        <taxon>Pseudomonadati</taxon>
        <taxon>Pseudomonadota</taxon>
        <taxon>Alphaproteobacteria</taxon>
        <taxon>Hyphomicrobiales</taxon>
        <taxon>Nitrobacteraceae</taxon>
        <taxon>Bradyrhizobium</taxon>
    </lineage>
</organism>
<name>QUEA_BRADU</name>
<feature type="chain" id="PRO_0000165385" description="S-adenosylmethionine:tRNA ribosyltransferase-isomerase">
    <location>
        <begin position="1"/>
        <end position="366"/>
    </location>
</feature>
<gene>
    <name evidence="1" type="primary">queA</name>
    <name type="ordered locus">bll4689</name>
</gene>
<accession>Q89L59</accession>
<comment type="function">
    <text evidence="1">Transfers and isomerizes the ribose moiety from AdoMet to the 7-aminomethyl group of 7-deazaguanine (preQ1-tRNA) to give epoxyqueuosine (oQ-tRNA).</text>
</comment>
<comment type="catalytic activity">
    <reaction evidence="1">
        <text>7-aminomethyl-7-carbaguanosine(34) in tRNA + S-adenosyl-L-methionine = epoxyqueuosine(34) in tRNA + adenine + L-methionine + 2 H(+)</text>
        <dbReference type="Rhea" id="RHEA:32155"/>
        <dbReference type="Rhea" id="RHEA-COMP:10342"/>
        <dbReference type="Rhea" id="RHEA-COMP:18582"/>
        <dbReference type="ChEBI" id="CHEBI:15378"/>
        <dbReference type="ChEBI" id="CHEBI:16708"/>
        <dbReference type="ChEBI" id="CHEBI:57844"/>
        <dbReference type="ChEBI" id="CHEBI:59789"/>
        <dbReference type="ChEBI" id="CHEBI:82833"/>
        <dbReference type="ChEBI" id="CHEBI:194443"/>
        <dbReference type="EC" id="2.4.99.17"/>
    </reaction>
</comment>
<comment type="pathway">
    <text evidence="1">tRNA modification; tRNA-queuosine biosynthesis.</text>
</comment>
<comment type="subunit">
    <text evidence="1">Monomer.</text>
</comment>
<comment type="subcellular location">
    <subcellularLocation>
        <location evidence="1">Cytoplasm</location>
    </subcellularLocation>
</comment>
<comment type="similarity">
    <text evidence="1">Belongs to the QueA family.</text>
</comment>
<sequence>MRTDLFDFDLPAERIALRPASPRDSAKMLVVEGGALRDRTISELPQWLKRGDQLVVNDTKVIAAQLKGRRIGRETEPKIEATLIKRLDGSRWQALVKPAKKLIAGDRIRFGNEGKVCLLGHLDAEVEAKGSEGEVTLSFSFHGPALDQAIADLGSPPLPPYIASKRTPDDQDFADYQTMFAANEGAVAAPTAGLHFTPALEQALRERGVGLNRVTLHVGAGTFLPVKVEDTAGHKMHAEWGTISAETAERLNIARHNGGRIIAVGTTSLRLLESAASEDGTIQPFAAETSIFITPGYRFRAVDILLTNFHLPKSTLFMLVSAFSGLETMRRAYAHAIAQGYRFYSYGDACLLFRAGGTEVHDPSPP</sequence>
<reference key="1">
    <citation type="journal article" date="2002" name="DNA Res.">
        <title>Complete genomic sequence of nitrogen-fixing symbiotic bacterium Bradyrhizobium japonicum USDA110.</title>
        <authorList>
            <person name="Kaneko T."/>
            <person name="Nakamura Y."/>
            <person name="Sato S."/>
            <person name="Minamisawa K."/>
            <person name="Uchiumi T."/>
            <person name="Sasamoto S."/>
            <person name="Watanabe A."/>
            <person name="Idesawa K."/>
            <person name="Iriguchi M."/>
            <person name="Kawashima K."/>
            <person name="Kohara M."/>
            <person name="Matsumoto M."/>
            <person name="Shimpo S."/>
            <person name="Tsuruoka H."/>
            <person name="Wada T."/>
            <person name="Yamada M."/>
            <person name="Tabata S."/>
        </authorList>
    </citation>
    <scope>NUCLEOTIDE SEQUENCE [LARGE SCALE GENOMIC DNA]</scope>
    <source>
        <strain>JCM 10833 / BCRC 13528 / IAM 13628 / NBRC 14792 / USDA 110</strain>
    </source>
</reference>